<gene>
    <name type="primary">FNDC8</name>
</gene>
<protein>
    <recommendedName>
        <fullName>Fibronectin type III domain-containing protein 8</fullName>
    </recommendedName>
</protein>
<organism>
    <name type="scientific">Bos taurus</name>
    <name type="common">Bovine</name>
    <dbReference type="NCBI Taxonomy" id="9913"/>
    <lineage>
        <taxon>Eukaryota</taxon>
        <taxon>Metazoa</taxon>
        <taxon>Chordata</taxon>
        <taxon>Craniata</taxon>
        <taxon>Vertebrata</taxon>
        <taxon>Euteleostomi</taxon>
        <taxon>Mammalia</taxon>
        <taxon>Eutheria</taxon>
        <taxon>Laurasiatheria</taxon>
        <taxon>Artiodactyla</taxon>
        <taxon>Ruminantia</taxon>
        <taxon>Pecora</taxon>
        <taxon>Bovidae</taxon>
        <taxon>Bovinae</taxon>
        <taxon>Bos</taxon>
    </lineage>
</organism>
<dbReference type="EMBL" id="BC110216">
    <property type="protein sequence ID" value="AAI10217.1"/>
    <property type="molecule type" value="mRNA"/>
</dbReference>
<dbReference type="RefSeq" id="NP_001069912.1">
    <property type="nucleotide sequence ID" value="NM_001076444.2"/>
</dbReference>
<dbReference type="SMR" id="Q2YDH8"/>
<dbReference type="FunCoup" id="Q2YDH8">
    <property type="interactions" value="265"/>
</dbReference>
<dbReference type="PaxDb" id="9913-ENSBTAP00000025417"/>
<dbReference type="GeneID" id="617117"/>
<dbReference type="KEGG" id="bta:617117"/>
<dbReference type="CTD" id="54752"/>
<dbReference type="eggNOG" id="ENOG502STU7">
    <property type="taxonomic scope" value="Eukaryota"/>
</dbReference>
<dbReference type="InParanoid" id="Q2YDH8"/>
<dbReference type="OrthoDB" id="9448151at2759"/>
<dbReference type="Proteomes" id="UP000009136">
    <property type="component" value="Unplaced"/>
</dbReference>
<dbReference type="CDD" id="cd00063">
    <property type="entry name" value="FN3"/>
    <property type="match status" value="1"/>
</dbReference>
<dbReference type="Gene3D" id="2.60.40.10">
    <property type="entry name" value="Immunoglobulins"/>
    <property type="match status" value="1"/>
</dbReference>
<dbReference type="InterPro" id="IPR003961">
    <property type="entry name" value="FN3_dom"/>
</dbReference>
<dbReference type="InterPro" id="IPR036116">
    <property type="entry name" value="FN3_sf"/>
</dbReference>
<dbReference type="InterPro" id="IPR013783">
    <property type="entry name" value="Ig-like_fold"/>
</dbReference>
<dbReference type="PANTHER" id="PTHR32430">
    <property type="entry name" value="FIBRONECTIN TYPE III DOMAIN-CONTAINING PROTEIN 8"/>
    <property type="match status" value="1"/>
</dbReference>
<dbReference type="PANTHER" id="PTHR32430:SF1">
    <property type="entry name" value="FIBRONECTIN TYPE III DOMAIN-CONTAINING PROTEIN 8"/>
    <property type="match status" value="1"/>
</dbReference>
<dbReference type="Pfam" id="PF00041">
    <property type="entry name" value="fn3"/>
    <property type="match status" value="1"/>
</dbReference>
<dbReference type="SMART" id="SM00060">
    <property type="entry name" value="FN3"/>
    <property type="match status" value="1"/>
</dbReference>
<dbReference type="SUPFAM" id="SSF49265">
    <property type="entry name" value="Fibronectin type III"/>
    <property type="match status" value="1"/>
</dbReference>
<dbReference type="PROSITE" id="PS50853">
    <property type="entry name" value="FN3"/>
    <property type="match status" value="1"/>
</dbReference>
<evidence type="ECO:0000255" key="1">
    <source>
        <dbReference type="PROSITE-ProRule" id="PRU00316"/>
    </source>
</evidence>
<keyword id="KW-1185">Reference proteome</keyword>
<proteinExistence type="evidence at transcript level"/>
<reference key="1">
    <citation type="submission" date="2005-11" db="EMBL/GenBank/DDBJ databases">
        <authorList>
            <consortium name="NIH - Mammalian Gene Collection (MGC) project"/>
        </authorList>
    </citation>
    <scope>NUCLEOTIDE SEQUENCE [LARGE SCALE MRNA]</scope>
    <source>
        <strain>Crossbred X Angus</strain>
        <tissue>Liver</tissue>
    </source>
</reference>
<accession>Q2YDH8</accession>
<name>FNDC8_BOVIN</name>
<sequence>MASETFYKVGDGEEAMLKKETLNVLNALDQMSKPFPNPKSMNRTVTTKSLPLSSRGSLVNFLEEDAINLPKHMPLEDSECSSDDTSISPMSSTLLNPIKLAVTQPNSRFFAGMLEGELNKLSLSSIAKSTEKGHLALCPQSKSQMAPGGLLDFDNPEVDTDTSSTPSESSVVLDVPEAPFVCEHTVSDSTAVISWTYAPGKQQVSFYQVLLQEVVRKNSGETPKAKNRPWIFNKILGTTVKLMELKPNTSYCLTVRAANTAGVGTWCKPYKFATVATDLNSFPENNPIQITVQRKEPQRKTVSLGLEDMRRLEDLEHLFPY</sequence>
<feature type="chain" id="PRO_0000284529" description="Fibronectin type III domain-containing protein 8">
    <location>
        <begin position="1"/>
        <end position="321"/>
    </location>
</feature>
<feature type="domain" description="Fibronectin type-III" evidence="1">
    <location>
        <begin position="175"/>
        <end position="277"/>
    </location>
</feature>